<gene>
    <name type="primary">usp44-a</name>
</gene>
<accession>Q6NTR6</accession>
<proteinExistence type="evidence at transcript level"/>
<evidence type="ECO:0000250" key="1"/>
<evidence type="ECO:0000255" key="2">
    <source>
        <dbReference type="PROSITE-ProRule" id="PRU00502"/>
    </source>
</evidence>
<evidence type="ECO:0000255" key="3">
    <source>
        <dbReference type="PROSITE-ProRule" id="PRU10092"/>
    </source>
</evidence>
<evidence type="ECO:0000255" key="4">
    <source>
        <dbReference type="PROSITE-ProRule" id="PRU10093"/>
    </source>
</evidence>
<evidence type="ECO:0000256" key="5">
    <source>
        <dbReference type="SAM" id="MobiDB-lite"/>
    </source>
</evidence>
<evidence type="ECO:0000305" key="6"/>
<sequence length="690" mass="79011">MDKCKHVGRLRLAQDHSILNPQKWHCVDCNTTESVWACLSCSHVACGRYIEEHALRHFQDSKHPLALEVNELYVFCYLCDDYVLNDNTTGDLKLLRSTLSAIKSQNYDCTTRSGRTLRSMVTADDSFISHEGAQAFLQNEDRAFTALWHRRHALLGKVFRSWFALTPKGKQRLEEERLREEAEQKREEARKKRQQLKRKLKEEMESTSPRKSSRLQHQIQPSPKTELPSVQKMNQKNSPTTKQKTPAPTSDKACFKKIGNSPIKRKPTVTPGVTGLRNLGNTCYMNSILQILSHLHVFRECFLQLDLNQTQELLAAAGSGKTRLSSKYPPGAELPRVTQKHTKVQRSLARRQSFSLGLSGGASNSRNMELIQPKEPSSKHISLCHELHTLFQVMWSGKWALVSPFAMLHSVWRLIPAFRGYAQQDAQEFLCELLDKVQQELETTGTRYPALIPTSQRKLIKQVLNVVNNIFHGQLLSQVTCLVCDHKSNTIEPFWDLSLEFPERYHFNGKETASQRPCLLTEMLAKFTETEALEGKIYACDQCNKAQKQLMVCRLPQVLRLHLKRFRWSGRNHREKIGVHVRFDQMLNMEPYCCRESTAALRADCFIYDLSSVVMHHGKGFGSGHYTAFCYNPEGGFWVHCNDSKLHSCTVEEVCKAQAYILFYTQRVTQENGHLSDTLPVHGSPQSPPR</sequence>
<keyword id="KW-0131">Cell cycle</keyword>
<keyword id="KW-0132">Cell division</keyword>
<keyword id="KW-0378">Hydrolase</keyword>
<keyword id="KW-0479">Metal-binding</keyword>
<keyword id="KW-0498">Mitosis</keyword>
<keyword id="KW-0539">Nucleus</keyword>
<keyword id="KW-0645">Protease</keyword>
<keyword id="KW-1185">Reference proteome</keyword>
<keyword id="KW-0788">Thiol protease</keyword>
<keyword id="KW-0833">Ubl conjugation pathway</keyword>
<keyword id="KW-0862">Zinc</keyword>
<keyword id="KW-0863">Zinc-finger</keyword>
<feature type="chain" id="PRO_0000395813" description="Ubiquitin carboxyl-terminal hydrolase 44-A">
    <location>
        <begin position="1"/>
        <end position="690"/>
    </location>
</feature>
<feature type="domain" description="USP">
    <location>
        <begin position="274"/>
        <end position="667"/>
    </location>
</feature>
<feature type="zinc finger region" description="UBP-type" evidence="2">
    <location>
        <begin position="2"/>
        <end position="99"/>
    </location>
</feature>
<feature type="region of interest" description="Disordered" evidence="5">
    <location>
        <begin position="185"/>
        <end position="253"/>
    </location>
</feature>
<feature type="region of interest" description="Disordered" evidence="5">
    <location>
        <begin position="321"/>
        <end position="340"/>
    </location>
</feature>
<feature type="compositionally biased region" description="Polar residues" evidence="5">
    <location>
        <begin position="206"/>
        <end position="223"/>
    </location>
</feature>
<feature type="compositionally biased region" description="Polar residues" evidence="5">
    <location>
        <begin position="231"/>
        <end position="248"/>
    </location>
</feature>
<feature type="active site" description="Nucleophile" evidence="3 4">
    <location>
        <position position="283"/>
    </location>
</feature>
<feature type="active site" description="Proton acceptor" evidence="3 4">
    <location>
        <position position="625"/>
    </location>
</feature>
<feature type="binding site" evidence="2">
    <location>
        <position position="4"/>
    </location>
    <ligand>
        <name>Zn(2+)</name>
        <dbReference type="ChEBI" id="CHEBI:29105"/>
        <label>1</label>
    </ligand>
</feature>
<feature type="binding site" evidence="2">
    <location>
        <position position="6"/>
    </location>
    <ligand>
        <name>Zn(2+)</name>
        <dbReference type="ChEBI" id="CHEBI:29105"/>
        <label>1</label>
    </ligand>
</feature>
<feature type="binding site" evidence="2">
    <location>
        <position position="26"/>
    </location>
    <ligand>
        <name>Zn(2+)</name>
        <dbReference type="ChEBI" id="CHEBI:29105"/>
        <label>2</label>
    </ligand>
</feature>
<feature type="binding site" evidence="2">
    <location>
        <position position="29"/>
    </location>
    <ligand>
        <name>Zn(2+)</name>
        <dbReference type="ChEBI" id="CHEBI:29105"/>
        <label>2</label>
    </ligand>
</feature>
<feature type="binding site" evidence="2">
    <location>
        <position position="38"/>
    </location>
    <ligand>
        <name>Zn(2+)</name>
        <dbReference type="ChEBI" id="CHEBI:29105"/>
        <label>3</label>
    </ligand>
</feature>
<feature type="binding site" evidence="2">
    <location>
        <position position="41"/>
    </location>
    <ligand>
        <name>Zn(2+)</name>
        <dbReference type="ChEBI" id="CHEBI:29105"/>
        <label>3</label>
    </ligand>
</feature>
<feature type="binding site" evidence="2">
    <location>
        <position position="46"/>
    </location>
    <ligand>
        <name>Zn(2+)</name>
        <dbReference type="ChEBI" id="CHEBI:29105"/>
        <label>2</label>
    </ligand>
</feature>
<feature type="binding site" evidence="2">
    <location>
        <position position="53"/>
    </location>
    <ligand>
        <name>Zn(2+)</name>
        <dbReference type="ChEBI" id="CHEBI:29105"/>
        <label>2</label>
    </ligand>
</feature>
<feature type="binding site" evidence="2">
    <location>
        <position position="57"/>
    </location>
    <ligand>
        <name>Zn(2+)</name>
        <dbReference type="ChEBI" id="CHEBI:29105"/>
        <label>3</label>
    </ligand>
</feature>
<feature type="binding site" evidence="2">
    <location>
        <position position="63"/>
    </location>
    <ligand>
        <name>Zn(2+)</name>
        <dbReference type="ChEBI" id="CHEBI:29105"/>
        <label>3</label>
    </ligand>
</feature>
<feature type="binding site" evidence="2">
    <location>
        <position position="76"/>
    </location>
    <ligand>
        <name>Zn(2+)</name>
        <dbReference type="ChEBI" id="CHEBI:29105"/>
        <label>1</label>
    </ligand>
</feature>
<feature type="binding site" evidence="2">
    <location>
        <position position="79"/>
    </location>
    <ligand>
        <name>Zn(2+)</name>
        <dbReference type="ChEBI" id="CHEBI:29105"/>
        <label>1</label>
    </ligand>
</feature>
<name>UP44A_XENLA</name>
<organism>
    <name type="scientific">Xenopus laevis</name>
    <name type="common">African clawed frog</name>
    <dbReference type="NCBI Taxonomy" id="8355"/>
    <lineage>
        <taxon>Eukaryota</taxon>
        <taxon>Metazoa</taxon>
        <taxon>Chordata</taxon>
        <taxon>Craniata</taxon>
        <taxon>Vertebrata</taxon>
        <taxon>Euteleostomi</taxon>
        <taxon>Amphibia</taxon>
        <taxon>Batrachia</taxon>
        <taxon>Anura</taxon>
        <taxon>Pipoidea</taxon>
        <taxon>Pipidae</taxon>
        <taxon>Xenopodinae</taxon>
        <taxon>Xenopus</taxon>
        <taxon>Xenopus</taxon>
    </lineage>
</organism>
<comment type="function">
    <text evidence="1">Deubiquitinase that plays a key role in the spindle checkpoint by preventing premature anaphase onset. Acts by specifically mediating deubiquitination of cdc20, a negative regulator of the anaphase promoting complex/cyclosome (APC/C) (By similarity).</text>
</comment>
<comment type="catalytic activity">
    <reaction>
        <text>Thiol-dependent hydrolysis of ester, thioester, amide, peptide and isopeptide bonds formed by the C-terminal Gly of ubiquitin (a 76-residue protein attached to proteins as an intracellular targeting signal).</text>
        <dbReference type="EC" id="3.4.19.12"/>
    </reaction>
</comment>
<comment type="subcellular location">
    <subcellularLocation>
        <location evidence="1">Nucleus</location>
    </subcellularLocation>
</comment>
<comment type="similarity">
    <text evidence="6">Belongs to the peptidase C19 family. USP44 subfamily.</text>
</comment>
<reference key="1">
    <citation type="submission" date="2004-04" db="EMBL/GenBank/DDBJ databases">
        <authorList>
            <consortium name="NIH - Xenopus Gene Collection (XGC) project"/>
        </authorList>
    </citation>
    <scope>NUCLEOTIDE SEQUENCE [LARGE SCALE MRNA]</scope>
    <source>
        <tissue>Ovary</tissue>
    </source>
</reference>
<protein>
    <recommendedName>
        <fullName>Ubiquitin carboxyl-terminal hydrolase 44-A</fullName>
        <ecNumber>3.4.19.12</ecNumber>
    </recommendedName>
    <alternativeName>
        <fullName>Deubiquitinating enzyme 44-A</fullName>
    </alternativeName>
    <alternativeName>
        <fullName>Ubiquitin thioesterase 44-A</fullName>
    </alternativeName>
    <alternativeName>
        <fullName>Ubiquitin-specific-processing protease 44-A</fullName>
    </alternativeName>
</protein>
<dbReference type="EC" id="3.4.19.12"/>
<dbReference type="EMBL" id="BC068889">
    <property type="protein sequence ID" value="AAH68889.1"/>
    <property type="molecule type" value="mRNA"/>
</dbReference>
<dbReference type="RefSeq" id="NP_001084641.1">
    <property type="nucleotide sequence ID" value="NM_001091172.1"/>
</dbReference>
<dbReference type="DNASU" id="414600"/>
<dbReference type="GeneID" id="414600"/>
<dbReference type="KEGG" id="xla:414600"/>
<dbReference type="AGR" id="Xenbase:XB-GENE-1014118"/>
<dbReference type="CTD" id="414600"/>
<dbReference type="Xenbase" id="XB-GENE-1014118">
    <property type="gene designation" value="usp44.L"/>
</dbReference>
<dbReference type="OrthoDB" id="21192at2759"/>
<dbReference type="Proteomes" id="UP000186698">
    <property type="component" value="Chromosome 3L"/>
</dbReference>
<dbReference type="Bgee" id="414600">
    <property type="expression patterns" value="Expressed in blastula and 19 other cell types or tissues"/>
</dbReference>
<dbReference type="GO" id="GO:0005737">
    <property type="term" value="C:cytoplasm"/>
    <property type="evidence" value="ECO:0000318"/>
    <property type="project" value="GO_Central"/>
</dbReference>
<dbReference type="GO" id="GO:0005634">
    <property type="term" value="C:nucleus"/>
    <property type="evidence" value="ECO:0000250"/>
    <property type="project" value="UniProtKB"/>
</dbReference>
<dbReference type="GO" id="GO:0004843">
    <property type="term" value="F:cysteine-type deubiquitinase activity"/>
    <property type="evidence" value="ECO:0000250"/>
    <property type="project" value="UniProtKB"/>
</dbReference>
<dbReference type="GO" id="GO:0008270">
    <property type="term" value="F:zinc ion binding"/>
    <property type="evidence" value="ECO:0007669"/>
    <property type="project" value="UniProtKB-KW"/>
</dbReference>
<dbReference type="GO" id="GO:0051301">
    <property type="term" value="P:cell division"/>
    <property type="evidence" value="ECO:0007669"/>
    <property type="project" value="UniProtKB-KW"/>
</dbReference>
<dbReference type="GO" id="GO:1904667">
    <property type="term" value="P:negative regulation of ubiquitin protein ligase activity"/>
    <property type="evidence" value="ECO:0000250"/>
    <property type="project" value="UniProtKB"/>
</dbReference>
<dbReference type="GO" id="GO:0016579">
    <property type="term" value="P:protein deubiquitination"/>
    <property type="evidence" value="ECO:0000250"/>
    <property type="project" value="UniProtKB"/>
</dbReference>
<dbReference type="GO" id="GO:0006508">
    <property type="term" value="P:proteolysis"/>
    <property type="evidence" value="ECO:0007669"/>
    <property type="project" value="UniProtKB-KW"/>
</dbReference>
<dbReference type="GO" id="GO:0010564">
    <property type="term" value="P:regulation of cell cycle process"/>
    <property type="evidence" value="ECO:0000318"/>
    <property type="project" value="GO_Central"/>
</dbReference>
<dbReference type="FunFam" id="3.30.40.10:FF:000067">
    <property type="entry name" value="Ubiquitinyl hydrolase 1"/>
    <property type="match status" value="1"/>
</dbReference>
<dbReference type="FunFam" id="3.90.70.10:FF:000406">
    <property type="entry name" value="Ubiquitinyl hydrolase 1"/>
    <property type="match status" value="1"/>
</dbReference>
<dbReference type="Gene3D" id="3.90.70.10">
    <property type="entry name" value="Cysteine proteinases"/>
    <property type="match status" value="1"/>
</dbReference>
<dbReference type="Gene3D" id="3.30.40.10">
    <property type="entry name" value="Zinc/RING finger domain, C3HC4 (zinc finger)"/>
    <property type="match status" value="1"/>
</dbReference>
<dbReference type="InterPro" id="IPR038765">
    <property type="entry name" value="Papain-like_cys_pep_sf"/>
</dbReference>
<dbReference type="InterPro" id="IPR001394">
    <property type="entry name" value="Peptidase_C19_UCH"/>
</dbReference>
<dbReference type="InterPro" id="IPR050185">
    <property type="entry name" value="Ub_carboxyl-term_hydrolase"/>
</dbReference>
<dbReference type="InterPro" id="IPR018200">
    <property type="entry name" value="USP_CS"/>
</dbReference>
<dbReference type="InterPro" id="IPR028889">
    <property type="entry name" value="USP_dom"/>
</dbReference>
<dbReference type="InterPro" id="IPR013083">
    <property type="entry name" value="Znf_RING/FYVE/PHD"/>
</dbReference>
<dbReference type="InterPro" id="IPR001607">
    <property type="entry name" value="Znf_UBP"/>
</dbReference>
<dbReference type="PANTHER" id="PTHR21646">
    <property type="entry name" value="UBIQUITIN CARBOXYL-TERMINAL HYDROLASE"/>
    <property type="match status" value="1"/>
</dbReference>
<dbReference type="PANTHER" id="PTHR21646:SF15">
    <property type="entry name" value="UBIQUITIN CARBOXYL-TERMINAL HYDROLASE 44"/>
    <property type="match status" value="1"/>
</dbReference>
<dbReference type="Pfam" id="PF00443">
    <property type="entry name" value="UCH"/>
    <property type="match status" value="1"/>
</dbReference>
<dbReference type="Pfam" id="PF02148">
    <property type="entry name" value="zf-UBP"/>
    <property type="match status" value="1"/>
</dbReference>
<dbReference type="SMART" id="SM00290">
    <property type="entry name" value="ZnF_UBP"/>
    <property type="match status" value="1"/>
</dbReference>
<dbReference type="SUPFAM" id="SSF54001">
    <property type="entry name" value="Cysteine proteinases"/>
    <property type="match status" value="1"/>
</dbReference>
<dbReference type="SUPFAM" id="SSF57850">
    <property type="entry name" value="RING/U-box"/>
    <property type="match status" value="1"/>
</dbReference>
<dbReference type="PROSITE" id="PS00972">
    <property type="entry name" value="USP_1"/>
    <property type="match status" value="1"/>
</dbReference>
<dbReference type="PROSITE" id="PS00973">
    <property type="entry name" value="USP_2"/>
    <property type="match status" value="1"/>
</dbReference>
<dbReference type="PROSITE" id="PS50235">
    <property type="entry name" value="USP_3"/>
    <property type="match status" value="1"/>
</dbReference>
<dbReference type="PROSITE" id="PS50271">
    <property type="entry name" value="ZF_UBP"/>
    <property type="match status" value="1"/>
</dbReference>